<feature type="chain" id="PRO_0000092824" description="Phosphate import ATP-binding protein PstB 1">
    <location>
        <begin position="1"/>
        <end position="253"/>
    </location>
</feature>
<feature type="domain" description="ABC transporter" evidence="1">
    <location>
        <begin position="7"/>
        <end position="248"/>
    </location>
</feature>
<feature type="binding site" evidence="1">
    <location>
        <begin position="39"/>
        <end position="46"/>
    </location>
    <ligand>
        <name>ATP</name>
        <dbReference type="ChEBI" id="CHEBI:30616"/>
    </ligand>
</feature>
<protein>
    <recommendedName>
        <fullName evidence="1">Phosphate import ATP-binding protein PstB 1</fullName>
        <ecNumber evidence="1">7.3.2.1</ecNumber>
    </recommendedName>
    <alternativeName>
        <fullName evidence="1">ABC phosphate transporter 1</fullName>
    </alternativeName>
    <alternativeName>
        <fullName evidence="1">Phosphate-transporting ATPase 1</fullName>
    </alternativeName>
</protein>
<name>PSTB1_LACLA</name>
<gene>
    <name evidence="1" type="primary">pstB1</name>
    <name type="ordered locus">LL1716</name>
    <name type="ORF">L154481</name>
</gene>
<organism>
    <name type="scientific">Lactococcus lactis subsp. lactis (strain IL1403)</name>
    <name type="common">Streptococcus lactis</name>
    <dbReference type="NCBI Taxonomy" id="272623"/>
    <lineage>
        <taxon>Bacteria</taxon>
        <taxon>Bacillati</taxon>
        <taxon>Bacillota</taxon>
        <taxon>Bacilli</taxon>
        <taxon>Lactobacillales</taxon>
        <taxon>Streptococcaceae</taxon>
        <taxon>Lactococcus</taxon>
    </lineage>
</organism>
<evidence type="ECO:0000255" key="1">
    <source>
        <dbReference type="HAMAP-Rule" id="MF_01702"/>
    </source>
</evidence>
<accession>Q9CEW8</accession>
<sequence length="253" mass="28179">MEKEAVLTVSDLSLYYSKKKALNTINMTFYKNEITALIGPSGCGKSTLLRSINRMNDLIPTVTITGAIDYKGKNIYSPKVDTVDLRKEIGMVFQQPNPFPFSIYENVVYGLRLKGVKDKALLDEVVENSLKAANIWDEVKDILHSSALGLSGGQQQRVCIARILAVNPEIILMDEPTSALDPISAARVEETMLELKKDYTIAIVTHSMQQASRISDRTAFMLDGNLIEYNDTKSIFLNPEKQETSDYISGKFG</sequence>
<proteinExistence type="inferred from homology"/>
<comment type="function">
    <text evidence="1">Part of the ABC transporter complex PstSACB involved in phosphate import. Responsible for energy coupling to the transport system.</text>
</comment>
<comment type="catalytic activity">
    <reaction evidence="1">
        <text>phosphate(out) + ATP + H2O = ADP + 2 phosphate(in) + H(+)</text>
        <dbReference type="Rhea" id="RHEA:24440"/>
        <dbReference type="ChEBI" id="CHEBI:15377"/>
        <dbReference type="ChEBI" id="CHEBI:15378"/>
        <dbReference type="ChEBI" id="CHEBI:30616"/>
        <dbReference type="ChEBI" id="CHEBI:43474"/>
        <dbReference type="ChEBI" id="CHEBI:456216"/>
        <dbReference type="EC" id="7.3.2.1"/>
    </reaction>
</comment>
<comment type="subunit">
    <text evidence="1">The complex is composed of two ATP-binding proteins (PstB), two transmembrane proteins (PstC and PstA) and a solute-binding protein (PstS).</text>
</comment>
<comment type="subcellular location">
    <subcellularLocation>
        <location evidence="1">Cell membrane</location>
        <topology evidence="1">Peripheral membrane protein</topology>
    </subcellularLocation>
</comment>
<comment type="similarity">
    <text evidence="1">Belongs to the ABC transporter superfamily. Phosphate importer (TC 3.A.1.7) family.</text>
</comment>
<dbReference type="EC" id="7.3.2.1" evidence="1"/>
<dbReference type="EMBL" id="AE005176">
    <property type="protein sequence ID" value="AAK05814.1"/>
    <property type="molecule type" value="Genomic_DNA"/>
</dbReference>
<dbReference type="PIR" id="D86839">
    <property type="entry name" value="D86839"/>
</dbReference>
<dbReference type="RefSeq" id="NP_267872.1">
    <property type="nucleotide sequence ID" value="NC_002662.1"/>
</dbReference>
<dbReference type="RefSeq" id="WP_010906105.1">
    <property type="nucleotide sequence ID" value="NC_002662.1"/>
</dbReference>
<dbReference type="SMR" id="Q9CEW8"/>
<dbReference type="PaxDb" id="272623-L154481"/>
<dbReference type="EnsemblBacteria" id="AAK05814">
    <property type="protein sequence ID" value="AAK05814"/>
    <property type="gene ID" value="L154481"/>
</dbReference>
<dbReference type="KEGG" id="lla:L154481"/>
<dbReference type="PATRIC" id="fig|272623.7.peg.1840"/>
<dbReference type="eggNOG" id="COG1117">
    <property type="taxonomic scope" value="Bacteria"/>
</dbReference>
<dbReference type="HOGENOM" id="CLU_000604_1_22_9"/>
<dbReference type="OrthoDB" id="9802185at2"/>
<dbReference type="Proteomes" id="UP000002196">
    <property type="component" value="Chromosome"/>
</dbReference>
<dbReference type="GO" id="GO:0005886">
    <property type="term" value="C:plasma membrane"/>
    <property type="evidence" value="ECO:0007669"/>
    <property type="project" value="UniProtKB-SubCell"/>
</dbReference>
<dbReference type="GO" id="GO:0005524">
    <property type="term" value="F:ATP binding"/>
    <property type="evidence" value="ECO:0007669"/>
    <property type="project" value="UniProtKB-KW"/>
</dbReference>
<dbReference type="GO" id="GO:0016887">
    <property type="term" value="F:ATP hydrolysis activity"/>
    <property type="evidence" value="ECO:0007669"/>
    <property type="project" value="InterPro"/>
</dbReference>
<dbReference type="GO" id="GO:0015415">
    <property type="term" value="F:ATPase-coupled phosphate ion transmembrane transporter activity"/>
    <property type="evidence" value="ECO:0007669"/>
    <property type="project" value="UniProtKB-EC"/>
</dbReference>
<dbReference type="GO" id="GO:0035435">
    <property type="term" value="P:phosphate ion transmembrane transport"/>
    <property type="evidence" value="ECO:0007669"/>
    <property type="project" value="InterPro"/>
</dbReference>
<dbReference type="CDD" id="cd03260">
    <property type="entry name" value="ABC_PstB_phosphate_transporter"/>
    <property type="match status" value="1"/>
</dbReference>
<dbReference type="Gene3D" id="3.40.50.300">
    <property type="entry name" value="P-loop containing nucleotide triphosphate hydrolases"/>
    <property type="match status" value="1"/>
</dbReference>
<dbReference type="InterPro" id="IPR003593">
    <property type="entry name" value="AAA+_ATPase"/>
</dbReference>
<dbReference type="InterPro" id="IPR003439">
    <property type="entry name" value="ABC_transporter-like_ATP-bd"/>
</dbReference>
<dbReference type="InterPro" id="IPR017871">
    <property type="entry name" value="ABC_transporter-like_CS"/>
</dbReference>
<dbReference type="InterPro" id="IPR027417">
    <property type="entry name" value="P-loop_NTPase"/>
</dbReference>
<dbReference type="InterPro" id="IPR005670">
    <property type="entry name" value="PstB-like"/>
</dbReference>
<dbReference type="NCBIfam" id="TIGR00972">
    <property type="entry name" value="3a0107s01c2"/>
    <property type="match status" value="1"/>
</dbReference>
<dbReference type="PANTHER" id="PTHR43423">
    <property type="entry name" value="ABC TRANSPORTER I FAMILY MEMBER 17"/>
    <property type="match status" value="1"/>
</dbReference>
<dbReference type="PANTHER" id="PTHR43423:SF1">
    <property type="entry name" value="ABC TRANSPORTER I FAMILY MEMBER 17"/>
    <property type="match status" value="1"/>
</dbReference>
<dbReference type="Pfam" id="PF00005">
    <property type="entry name" value="ABC_tran"/>
    <property type="match status" value="1"/>
</dbReference>
<dbReference type="SMART" id="SM00382">
    <property type="entry name" value="AAA"/>
    <property type="match status" value="1"/>
</dbReference>
<dbReference type="SUPFAM" id="SSF52540">
    <property type="entry name" value="P-loop containing nucleoside triphosphate hydrolases"/>
    <property type="match status" value="1"/>
</dbReference>
<dbReference type="PROSITE" id="PS00211">
    <property type="entry name" value="ABC_TRANSPORTER_1"/>
    <property type="match status" value="1"/>
</dbReference>
<dbReference type="PROSITE" id="PS50893">
    <property type="entry name" value="ABC_TRANSPORTER_2"/>
    <property type="match status" value="1"/>
</dbReference>
<dbReference type="PROSITE" id="PS51238">
    <property type="entry name" value="PSTB"/>
    <property type="match status" value="1"/>
</dbReference>
<keyword id="KW-0067">ATP-binding</keyword>
<keyword id="KW-1003">Cell membrane</keyword>
<keyword id="KW-0472">Membrane</keyword>
<keyword id="KW-0547">Nucleotide-binding</keyword>
<keyword id="KW-0592">Phosphate transport</keyword>
<keyword id="KW-1185">Reference proteome</keyword>
<keyword id="KW-1278">Translocase</keyword>
<keyword id="KW-0813">Transport</keyword>
<reference key="1">
    <citation type="journal article" date="2001" name="Genome Res.">
        <title>The complete genome sequence of the lactic acid bacterium Lactococcus lactis ssp. lactis IL1403.</title>
        <authorList>
            <person name="Bolotin A."/>
            <person name="Wincker P."/>
            <person name="Mauger S."/>
            <person name="Jaillon O."/>
            <person name="Malarme K."/>
            <person name="Weissenbach J."/>
            <person name="Ehrlich S.D."/>
            <person name="Sorokin A."/>
        </authorList>
    </citation>
    <scope>NUCLEOTIDE SEQUENCE [LARGE SCALE GENOMIC DNA]</scope>
    <source>
        <strain>IL1403</strain>
    </source>
</reference>